<name>VSGP_EBOG4</name>
<proteinExistence type="inferred from homology"/>
<gene>
    <name type="primary">GP</name>
</gene>
<evidence type="ECO:0000250" key="1"/>
<evidence type="ECO:0000250" key="2">
    <source>
        <dbReference type="UniProtKB" id="P60170"/>
    </source>
</evidence>
<evidence type="ECO:0000255" key="3"/>
<evidence type="ECO:0000305" key="4"/>
<protein>
    <recommendedName>
        <fullName>Pre-small/secreted glycoprotein</fullName>
        <shortName>pre-sGP</shortName>
    </recommendedName>
    <component>
        <recommendedName>
            <fullName>Small/secreted glycoprotein</fullName>
            <shortName>sGP</shortName>
        </recommendedName>
    </component>
    <component>
        <recommendedName>
            <fullName>Delta-peptide</fullName>
        </recommendedName>
    </component>
</protein>
<organism>
    <name type="scientific">Zaire ebolavirus (strain Gabon-94)</name>
    <name type="common">ZEBOV</name>
    <name type="synonym">Zaire Ebola virus</name>
    <dbReference type="NCBI Taxonomy" id="128947"/>
    <lineage>
        <taxon>Viruses</taxon>
        <taxon>Riboviria</taxon>
        <taxon>Orthornavirae</taxon>
        <taxon>Negarnaviricota</taxon>
        <taxon>Haploviricotina</taxon>
        <taxon>Monjiviricetes</taxon>
        <taxon>Mononegavirales</taxon>
        <taxon>Filoviridae</taxon>
        <taxon>Orthoebolavirus</taxon>
        <taxon>Orthoebolavirus zairense</taxon>
        <taxon>Zaire ebolavirus</taxon>
    </lineage>
</organism>
<comment type="function">
    <molecule>Small/secreted glycoprotein</molecule>
    <text evidence="2">Seems to possess an anti-inflammatory activity as it can reverse the barrier-decreasing effects of TNF alpha. Might therefore contribute to the lack of inflammatory reaction seen during infection in spite the of extensive necrosis and massive virus production. Does not seem to be involved in activation of primary macrophages. Does not seem to interact specifically with neutrophils.</text>
</comment>
<comment type="function">
    <molecule>Delta-peptide</molecule>
    <text evidence="2">Viroporin that permeabilizes mammalian cell plasma membranes. It acts by altering permeation of ionic compounds and small molecules. This activity may lead to viral enterotoxic activity.</text>
</comment>
<comment type="subunit">
    <molecule>Small/secreted glycoprotein</molecule>
    <text evidence="2">Homodimer; disulfide-linked (By similarity). The homodimers are linked by two disulfide bonds in a parallel orientation (By similarity).</text>
</comment>
<comment type="subunit">
    <molecule>Delta-peptide</molecule>
    <text>Monomer.</text>
</comment>
<comment type="subcellular location">
    <molecule>Small/secreted glycoprotein</molecule>
    <subcellularLocation>
        <location evidence="2">Secreted</location>
    </subcellularLocation>
</comment>
<comment type="subcellular location">
    <molecule>Delta-peptide</molecule>
    <subcellularLocation>
        <location evidence="2">Secreted</location>
    </subcellularLocation>
</comment>
<comment type="PTM">
    <molecule>Pre-small/secreted glycoprotein</molecule>
    <text evidence="2">This precursor is processed into mature sGP and delta-peptide by host furin or furin-like proteases. The cleavage site corresponds to the furin optimal cleavage sequence [KR]-X-[KR]-R.</text>
</comment>
<comment type="PTM">
    <molecule>Small/secreted glycoprotein</molecule>
    <text evidence="2">N-glycosylated.</text>
</comment>
<comment type="PTM">
    <molecule>Delta-peptide</molecule>
    <text evidence="2">O-glycosylated.</text>
</comment>
<comment type="RNA editing">
    <location>
        <position position="295" evidence="1"/>
    </location>
    <text evidence="1">Partially edited. RNA editing at this position consists of an insertion of one adenine nucleotide. The sequence displayed here is the small secreted glycoprotein, derived from the unedited RNA. The edited RNA gives rise to the full-length transmembrane glycoprotein (AC O11457) (By similarity).</text>
</comment>
<comment type="similarity">
    <text evidence="4">Belongs to the filoviruses glycoprotein family.</text>
</comment>
<reference key="1">
    <citation type="journal article" date="1997" name="Virology">
        <title>Emergence of subtype Zaire Ebola virus in Gabon.</title>
        <authorList>
            <person name="Volchkov V."/>
            <person name="Volchkova V."/>
            <person name="Eckel C."/>
            <person name="Klenk H.-D."/>
            <person name="Bouloy M."/>
            <person name="Leguenno B."/>
            <person name="Feldmann H."/>
        </authorList>
    </citation>
    <scope>NUCLEOTIDE SEQUENCE [GENOMIC RNA]</scope>
</reference>
<keyword id="KW-0165">Cleavage on pair of basic residues</keyword>
<keyword id="KW-1015">Disulfide bond</keyword>
<keyword id="KW-0325">Glycoprotein</keyword>
<keyword id="KW-0407">Ion channel</keyword>
<keyword id="KW-0406">Ion transport</keyword>
<keyword id="KW-0691">RNA editing</keyword>
<keyword id="KW-0964">Secreted</keyword>
<keyword id="KW-0732">Signal</keyword>
<keyword id="KW-0813">Transport</keyword>
<keyword id="KW-1182">Viral ion channel</keyword>
<accession>O11458</accession>
<dbReference type="EMBL" id="U77384">
    <property type="protein sequence ID" value="AAC57990.1"/>
    <property type="molecule type" value="Genomic_RNA"/>
</dbReference>
<dbReference type="SMR" id="O11458"/>
<dbReference type="GlyCosmos" id="O11458">
    <property type="glycosylation" value="6 sites, No reported glycans"/>
</dbReference>
<dbReference type="GO" id="GO:0005576">
    <property type="term" value="C:extracellular region"/>
    <property type="evidence" value="ECO:0007669"/>
    <property type="project" value="UniProtKB-SubCell"/>
</dbReference>
<dbReference type="GO" id="GO:0033644">
    <property type="term" value="C:host cell membrane"/>
    <property type="evidence" value="ECO:0007669"/>
    <property type="project" value="UniProtKB-KW"/>
</dbReference>
<dbReference type="GO" id="GO:0015267">
    <property type="term" value="F:channel activity"/>
    <property type="evidence" value="ECO:0007669"/>
    <property type="project" value="UniProtKB-KW"/>
</dbReference>
<dbReference type="GO" id="GO:0034220">
    <property type="term" value="P:monoatomic ion transmembrane transport"/>
    <property type="evidence" value="ECO:0007669"/>
    <property type="project" value="UniProtKB-KW"/>
</dbReference>
<dbReference type="InterPro" id="IPR014625">
    <property type="entry name" value="GPC_FiloV"/>
</dbReference>
<dbReference type="InterPro" id="IPR002561">
    <property type="entry name" value="GPC_filovir-type_extra_dom"/>
</dbReference>
<dbReference type="Pfam" id="PF01611">
    <property type="entry name" value="Filo_glycop"/>
    <property type="match status" value="1"/>
</dbReference>
<dbReference type="PIRSF" id="PIRSF036874">
    <property type="entry name" value="GPC_FiloV"/>
    <property type="match status" value="1"/>
</dbReference>
<feature type="signal peptide" evidence="3">
    <location>
        <begin position="1"/>
        <end position="32"/>
    </location>
</feature>
<feature type="chain" id="PRO_0000037491" description="Pre-small/secreted glycoprotein" evidence="1">
    <location>
        <begin position="33"/>
        <end position="364"/>
    </location>
</feature>
<feature type="chain" id="PRO_0000037492" description="Small/secreted glycoprotein" evidence="1">
    <location>
        <begin position="33"/>
        <end position="324"/>
    </location>
</feature>
<feature type="chain" id="PRO_0000037493" description="Delta-peptide" evidence="1">
    <location>
        <begin position="325"/>
        <end position="364"/>
    </location>
</feature>
<feature type="site" description="Cleavage; by host furin" evidence="1">
    <location>
        <begin position="324"/>
        <end position="325"/>
    </location>
</feature>
<feature type="glycosylation site" description="N-linked (GlcNAc...) asparagine; by host" evidence="3">
    <location>
        <position position="40"/>
    </location>
</feature>
<feature type="glycosylation site" description="N-linked (GlcNAc...) asparagine; by host" evidence="3">
    <location>
        <position position="204"/>
    </location>
</feature>
<feature type="glycosylation site" description="N-linked (GlcNAc...) asparagine; by host" evidence="3">
    <location>
        <position position="228"/>
    </location>
</feature>
<feature type="glycosylation site" description="N-linked (GlcNAc...) asparagine; by host" evidence="3">
    <location>
        <position position="238"/>
    </location>
</feature>
<feature type="glycosylation site" description="N-linked (GlcNAc...) asparagine; by host" evidence="3">
    <location>
        <position position="257"/>
    </location>
</feature>
<feature type="glycosylation site" description="N-linked (GlcNAc...) asparagine; by host" evidence="3">
    <location>
        <position position="268"/>
    </location>
</feature>
<feature type="disulfide bond" description="Interchain" evidence="1">
    <location>
        <position position="53"/>
    </location>
</feature>
<feature type="disulfide bond" evidence="1">
    <location>
        <begin position="108"/>
        <end position="135"/>
    </location>
</feature>
<feature type="disulfide bond" evidence="1">
    <location>
        <begin position="121"/>
        <end position="147"/>
    </location>
</feature>
<feature type="disulfide bond" description="Interchain" evidence="1">
    <location>
        <position position="306"/>
    </location>
</feature>
<organismHost>
    <name type="scientific">Epomops franqueti</name>
    <name type="common">Franquet's epauletted fruit bat</name>
    <name type="synonym">Epomophorus franqueti</name>
    <dbReference type="NCBI Taxonomy" id="77231"/>
</organismHost>
<organismHost>
    <name type="scientific">Homo sapiens</name>
    <name type="common">Human</name>
    <dbReference type="NCBI Taxonomy" id="9606"/>
</organismHost>
<organismHost>
    <name type="scientific">Myonycteris torquata</name>
    <name type="common">Little collared fruit bat</name>
    <dbReference type="NCBI Taxonomy" id="77243"/>
</organismHost>
<sequence>MGVTGILQLPRDRFKRTSFFLWVIILFQRTFSIPLGVIHNSTLQVSDVDKLVCRDKLSSTNQLRSVGLNLEGNGVATDVPSATKRWGFRSGVPPKVVNYEAGEWAENCYNLEIKKPDGSECLPAAPDGIRGFPRCRYVHKVSGTGPCAGDFAFHKEGAFFLYDRLASTVIYRGTTFAEGVVAFLILPQAKKDFFSSHPLREPVNATEDPSSGYYSTTIRYQATGFGTNETEYLFEVDNLTYVQLESRFTPQFLLQLNETRYTSGKRSNTTGKLIWKVNPEIDTTIGEWAFWETKKTSLEKFAVKSCLSQLYQTEPKTSVVRVRRELLPTQGPTQQLKTTKSWLQKIPLQWFKCTVKEGKLQCRI</sequence>